<gene>
    <name evidence="1" type="primary">NA</name>
</gene>
<accession>Q30NP8</accession>
<sequence length="469" mass="52120">MNPNQKIITIGSVSLTIATICFLMQIAILVTTVTLHFKQYECDSPANKQVMPCEPIIIERNITEIVYLTNTTIEKEICPKLVEYRNWSKPQCKITGFAPFSKDNSIRLSAGGDIWVTREPYVSCDPGKCYQFALGQGTTLDNKHSNDTIHDRTPHRTLLMNELGVPFHLGTRQVCIAWSSSSCHDGKAWLHVCVTGYDKNATASFIYDGRLVDSIGSWSQNILRTQESECVCINGTCTVVMTDGSASGRADTKILFIEEGKIVHISPLSGSAQHVEECSCYPRYPGVRCICRDNWKGSNRPVVDINVKDYSIDSSYVCSGLVGDTPRNNDRSSSSYCRNPNNEKGTHGVKGWAFDDGNDVWMGRTISEDSRSGYETFKVIGGWSTPNSKLQINRQVIVDSDNRSGYSGIFSVEGKSCINRCFYVELIRGREQETRVWWTSNSIVVFCGTSGTYGTGSWPDGADINLMPI</sequence>
<reference key="1">
    <citation type="submission" date="2005-11" db="EMBL/GenBank/DDBJ databases">
        <title>The NIAID influenza genome sequencing project.</title>
        <authorList>
            <person name="Ghedin E."/>
            <person name="Spiro D."/>
            <person name="Miller N."/>
            <person name="Zaborsky J."/>
            <person name="Feldblyum T."/>
            <person name="Subbu V."/>
            <person name="Shumway M."/>
            <person name="Sparenborg J."/>
            <person name="Groveman L."/>
            <person name="Halpin R."/>
            <person name="Sitz J."/>
            <person name="Koo H."/>
            <person name="Salzberg S.L."/>
            <person name="Webster R.G."/>
            <person name="Hoffmann E."/>
            <person name="Krauss S."/>
            <person name="Naeve C."/>
            <person name="Bao Y."/>
            <person name="Bolotov P."/>
            <person name="Dernovoy D."/>
            <person name="Kiryutin B."/>
            <person name="Lipman D.J."/>
            <person name="Tatusova T."/>
        </authorList>
    </citation>
    <scope>NUCLEOTIDE SEQUENCE [GENOMIC RNA]</scope>
</reference>
<reference key="2">
    <citation type="journal article" date="2004" name="Virus Res.">
        <title>Assembly and budding of influenza virus.</title>
        <authorList>
            <person name="Nayak D.P."/>
            <person name="Hui E.K."/>
            <person name="Barman S."/>
        </authorList>
    </citation>
    <scope>REVIEW</scope>
</reference>
<reference key="3">
    <citation type="journal article" date="2005" name="N. Engl. J. Med.">
        <title>Neuraminidase inhibitors for influenza.</title>
        <authorList>
            <person name="Moscona A."/>
        </authorList>
    </citation>
    <scope>REVIEW</scope>
</reference>
<reference key="4">
    <citation type="journal article" date="2005" name="Biol. Pharm. Bull.">
        <title>Sialobiology of influenza: molecular mechanism of host range variation of influenza viruses.</title>
        <authorList>
            <person name="Suzuki Y."/>
        </authorList>
    </citation>
    <scope>REVIEW</scope>
</reference>
<comment type="function">
    <text evidence="1">Catalyzes the removal of terminal sialic acid residues from viral and cellular glycoconjugates. Cleaves off the terminal sialic acids on the glycosylated HA during virus budding to facilitate virus release. Additionally helps virus spread through the circulation by further removing sialic acids from the cell surface. These cleavages prevent self-aggregation and ensure the efficient spread of the progeny virus from cell to cell. Otherwise, infection would be limited to one round of replication. Described as a receptor-destroying enzyme because it cleaves a terminal sialic acid from the cellular receptors. May facilitate viral invasion of the upper airways by cleaving the sialic acid moieties on the mucin of the airway epithelial cells. Likely to plays a role in the budding process through its association with lipid rafts during intracellular transport. May additionally display a raft-association independent effect on budding. Plays a role in the determination of host range restriction on replication and virulence. Sialidase activity in late endosome/lysosome traffic seems to enhance virus replication.</text>
</comment>
<comment type="catalytic activity">
    <reaction evidence="1">
        <text>Hydrolysis of alpha-(2-&gt;3)-, alpha-(2-&gt;6)-, alpha-(2-&gt;8)- glycosidic linkages of terminal sialic acid residues in oligosaccharides, glycoproteins, glycolipids, colominic acid and synthetic substrates.</text>
        <dbReference type="EC" id="3.2.1.18"/>
    </reaction>
</comment>
<comment type="cofactor">
    <cofactor evidence="1">
        <name>Ca(2+)</name>
        <dbReference type="ChEBI" id="CHEBI:29108"/>
    </cofactor>
</comment>
<comment type="activity regulation">
    <text evidence="1">Inhibited by the neuraminidase inhibitors zanamivir (Relenza) and oseltamivir (Tamiflu). These drugs interfere with the release of progeny virus from infected cells and are effective against all influenza strains. Resistance to neuraminidase inhibitors is quite rare.</text>
</comment>
<comment type="subunit">
    <text evidence="1">Homotetramer.</text>
</comment>
<comment type="subcellular location">
    <subcellularLocation>
        <location evidence="1">Virion membrane</location>
    </subcellularLocation>
    <subcellularLocation>
        <location evidence="1">Host apical cell membrane</location>
        <topology evidence="1">Single-pass type II membrane protein</topology>
    </subcellularLocation>
    <text evidence="1">Preferentially accumulates at the apical plasma membrane in infected polarized epithelial cells, which is the virus assembly site. Uses lipid rafts for cell surface transport and apical sorting. In the virion, forms a mushroom-shaped spike on the surface of the membrane.</text>
</comment>
<comment type="domain">
    <text evidence="1">Intact N-terminus is essential for virion morphogenesis. Possesses two apical sorting signals, one in the ectodomain, which is likely to be a glycan, and the other in the transmembrane domain. The transmembrane domain also plays a role in lipid raft association.</text>
</comment>
<comment type="PTM">
    <text evidence="1">N-glycosylated.</text>
</comment>
<comment type="miscellaneous">
    <text>The influenza A genome consist of 8 RNA segments. Genetic variation of hemagglutinin and/or neuraminidase genes results in the emergence of new influenza strains. The mechanism of variation can be the result of point mutations or the result of genetic reassortment between segments of two different strains.</text>
</comment>
<comment type="similarity">
    <text evidence="1">Belongs to the glycosyl hydrolase 34 family.</text>
</comment>
<dbReference type="EC" id="3.2.1.18" evidence="1"/>
<dbReference type="EMBL" id="CY006046">
    <property type="protein sequence ID" value="ABB46395.1"/>
    <property type="molecule type" value="Genomic_RNA"/>
</dbReference>
<dbReference type="SMR" id="Q30NP8"/>
<dbReference type="CAZy" id="GH34">
    <property type="family name" value="Glycoside Hydrolase Family 34"/>
</dbReference>
<dbReference type="GlyCosmos" id="Q30NP8">
    <property type="glycosylation" value="7 sites, No reported glycans"/>
</dbReference>
<dbReference type="PRO" id="PR:Q30NP8"/>
<dbReference type="Proteomes" id="UP000000827">
    <property type="component" value="Genome"/>
</dbReference>
<dbReference type="GO" id="GO:0020002">
    <property type="term" value="C:host cell plasma membrane"/>
    <property type="evidence" value="ECO:0007669"/>
    <property type="project" value="UniProtKB-SubCell"/>
</dbReference>
<dbReference type="GO" id="GO:0016020">
    <property type="term" value="C:membrane"/>
    <property type="evidence" value="ECO:0007669"/>
    <property type="project" value="UniProtKB-UniRule"/>
</dbReference>
<dbReference type="GO" id="GO:0055036">
    <property type="term" value="C:virion membrane"/>
    <property type="evidence" value="ECO:0007669"/>
    <property type="project" value="UniProtKB-SubCell"/>
</dbReference>
<dbReference type="GO" id="GO:0004308">
    <property type="term" value="F:exo-alpha-sialidase activity"/>
    <property type="evidence" value="ECO:0007669"/>
    <property type="project" value="UniProtKB-UniRule"/>
</dbReference>
<dbReference type="GO" id="GO:0046872">
    <property type="term" value="F:metal ion binding"/>
    <property type="evidence" value="ECO:0007669"/>
    <property type="project" value="UniProtKB-UniRule"/>
</dbReference>
<dbReference type="GO" id="GO:0005975">
    <property type="term" value="P:carbohydrate metabolic process"/>
    <property type="evidence" value="ECO:0007669"/>
    <property type="project" value="InterPro"/>
</dbReference>
<dbReference type="GO" id="GO:0046761">
    <property type="term" value="P:viral budding from plasma membrane"/>
    <property type="evidence" value="ECO:0007669"/>
    <property type="project" value="UniProtKB-UniRule"/>
</dbReference>
<dbReference type="CDD" id="cd15483">
    <property type="entry name" value="Influenza_NA"/>
    <property type="match status" value="1"/>
</dbReference>
<dbReference type="Gene3D" id="2.120.10.10">
    <property type="match status" value="1"/>
</dbReference>
<dbReference type="HAMAP" id="MF_04071">
    <property type="entry name" value="INFV_NRAM"/>
    <property type="match status" value="1"/>
</dbReference>
<dbReference type="InterPro" id="IPR001860">
    <property type="entry name" value="Glyco_hydro_34"/>
</dbReference>
<dbReference type="InterPro" id="IPR033654">
    <property type="entry name" value="Sialidase_Influenza_A/B"/>
</dbReference>
<dbReference type="InterPro" id="IPR036278">
    <property type="entry name" value="Sialidase_sf"/>
</dbReference>
<dbReference type="Pfam" id="PF00064">
    <property type="entry name" value="Neur"/>
    <property type="match status" value="1"/>
</dbReference>
<dbReference type="SUPFAM" id="SSF50939">
    <property type="entry name" value="Sialidases"/>
    <property type="match status" value="1"/>
</dbReference>
<proteinExistence type="inferred from homology"/>
<organism>
    <name type="scientific">Influenza A virus (strain A/Beijing/39/1975 H3N2)</name>
    <dbReference type="NCBI Taxonomy" id="383596"/>
    <lineage>
        <taxon>Viruses</taxon>
        <taxon>Riboviria</taxon>
        <taxon>Orthornavirae</taxon>
        <taxon>Negarnaviricota</taxon>
        <taxon>Polyploviricotina</taxon>
        <taxon>Insthoviricetes</taxon>
        <taxon>Articulavirales</taxon>
        <taxon>Orthomyxoviridae</taxon>
        <taxon>Alphainfluenzavirus</taxon>
        <taxon>Alphainfluenzavirus influenzae</taxon>
        <taxon>Influenza A virus</taxon>
    </lineage>
</organism>
<keyword id="KW-0106">Calcium</keyword>
<keyword id="KW-1015">Disulfide bond</keyword>
<keyword id="KW-0325">Glycoprotein</keyword>
<keyword id="KW-0326">Glycosidase</keyword>
<keyword id="KW-1032">Host cell membrane</keyword>
<keyword id="KW-1043">Host membrane</keyword>
<keyword id="KW-0378">Hydrolase</keyword>
<keyword id="KW-0472">Membrane</keyword>
<keyword id="KW-0479">Metal-binding</keyword>
<keyword id="KW-0735">Signal-anchor</keyword>
<keyword id="KW-0812">Transmembrane</keyword>
<keyword id="KW-1133">Transmembrane helix</keyword>
<keyword id="KW-0946">Virion</keyword>
<protein>
    <recommendedName>
        <fullName evidence="1">Neuraminidase</fullName>
        <ecNumber evidence="1">3.2.1.18</ecNumber>
    </recommendedName>
</protein>
<name>NRAM_I75A0</name>
<evidence type="ECO:0000255" key="1">
    <source>
        <dbReference type="HAMAP-Rule" id="MF_04071"/>
    </source>
</evidence>
<organismHost>
    <name type="scientific">Aves</name>
    <dbReference type="NCBI Taxonomy" id="8782"/>
</organismHost>
<organismHost>
    <name type="scientific">Cetacea</name>
    <name type="common">whales</name>
    <dbReference type="NCBI Taxonomy" id="9721"/>
</organismHost>
<organismHost>
    <name type="scientific">Homo sapiens</name>
    <name type="common">Human</name>
    <dbReference type="NCBI Taxonomy" id="9606"/>
</organismHost>
<organismHost>
    <name type="scientific">Phocidae</name>
    <name type="common">true seals</name>
    <dbReference type="NCBI Taxonomy" id="9709"/>
</organismHost>
<organismHost>
    <name type="scientific">Sus scrofa</name>
    <name type="common">Pig</name>
    <dbReference type="NCBI Taxonomy" id="9823"/>
</organismHost>
<feature type="chain" id="PRO_0000280121" description="Neuraminidase">
    <location>
        <begin position="1"/>
        <end position="469"/>
    </location>
</feature>
<feature type="topological domain" description="Intravirion" evidence="1">
    <location>
        <begin position="1"/>
        <end position="9"/>
    </location>
</feature>
<feature type="transmembrane region" description="Helical" evidence="1">
    <location>
        <begin position="10"/>
        <end position="30"/>
    </location>
</feature>
<feature type="topological domain" description="Virion surface" evidence="1">
    <location>
        <begin position="31"/>
        <end position="469"/>
    </location>
</feature>
<feature type="region of interest" description="Involved in apical transport and lipid raft association" evidence="1">
    <location>
        <begin position="11"/>
        <end position="33"/>
    </location>
</feature>
<feature type="region of interest" description="Hypervariable stalk region" evidence="1">
    <location>
        <begin position="36"/>
        <end position="88"/>
    </location>
</feature>
<feature type="region of interest" description="Head of neuraminidase" evidence="1">
    <location>
        <begin position="91"/>
        <end position="469"/>
    </location>
</feature>
<feature type="active site" description="Proton donor/acceptor" evidence="1">
    <location>
        <position position="151"/>
    </location>
</feature>
<feature type="active site" description="Nucleophile" evidence="1">
    <location>
        <position position="406"/>
    </location>
</feature>
<feature type="binding site" evidence="1">
    <location>
        <position position="118"/>
    </location>
    <ligand>
        <name>substrate</name>
    </ligand>
</feature>
<feature type="binding site" evidence="1">
    <location>
        <position position="152"/>
    </location>
    <ligand>
        <name>substrate</name>
    </ligand>
</feature>
<feature type="binding site" evidence="1">
    <location>
        <begin position="276"/>
        <end position="277"/>
    </location>
    <ligand>
        <name>substrate</name>
    </ligand>
</feature>
<feature type="binding site" evidence="1">
    <location>
        <position position="292"/>
    </location>
    <ligand>
        <name>substrate</name>
    </ligand>
</feature>
<feature type="binding site" evidence="1">
    <location>
        <position position="293"/>
    </location>
    <ligand>
        <name>Ca(2+)</name>
        <dbReference type="ChEBI" id="CHEBI:29108"/>
    </ligand>
</feature>
<feature type="binding site" evidence="1">
    <location>
        <position position="297"/>
    </location>
    <ligand>
        <name>Ca(2+)</name>
        <dbReference type="ChEBI" id="CHEBI:29108"/>
    </ligand>
</feature>
<feature type="binding site" evidence="1">
    <location>
        <position position="324"/>
    </location>
    <ligand>
        <name>Ca(2+)</name>
        <dbReference type="ChEBI" id="CHEBI:29108"/>
    </ligand>
</feature>
<feature type="binding site" evidence="1">
    <location>
        <position position="371"/>
    </location>
    <ligand>
        <name>substrate</name>
    </ligand>
</feature>
<feature type="glycosylation site" description="N-linked (GlcNAc...) asparagine; by host" evidence="1">
    <location>
        <position position="61"/>
    </location>
</feature>
<feature type="glycosylation site" description="N-linked (GlcNAc...) asparagine; by host" evidence="1">
    <location>
        <position position="70"/>
    </location>
</feature>
<feature type="glycosylation site" description="N-linked (GlcNAc...) asparagine; by host" evidence="1">
    <location>
        <position position="86"/>
    </location>
</feature>
<feature type="glycosylation site" description="N-linked (GlcNAc...) asparagine; by host" evidence="1">
    <location>
        <position position="146"/>
    </location>
</feature>
<feature type="glycosylation site" description="N-linked (GlcNAc...) asparagine; by host" evidence="1">
    <location>
        <position position="200"/>
    </location>
</feature>
<feature type="glycosylation site" description="N-linked (GlcNAc...) asparagine; by host" evidence="1">
    <location>
        <position position="234"/>
    </location>
</feature>
<feature type="glycosylation site" description="N-linked (GlcNAc...) asparagine; by host" evidence="1">
    <location>
        <position position="402"/>
    </location>
</feature>
<feature type="disulfide bond" evidence="1">
    <location>
        <begin position="92"/>
        <end position="417"/>
    </location>
</feature>
<feature type="disulfide bond" evidence="1">
    <location>
        <begin position="124"/>
        <end position="129"/>
    </location>
</feature>
<feature type="disulfide bond" evidence="1">
    <location>
        <begin position="183"/>
        <end position="230"/>
    </location>
</feature>
<feature type="disulfide bond" evidence="1">
    <location>
        <begin position="232"/>
        <end position="237"/>
    </location>
</feature>
<feature type="disulfide bond" evidence="1">
    <location>
        <begin position="278"/>
        <end position="291"/>
    </location>
</feature>
<feature type="disulfide bond" evidence="1">
    <location>
        <begin position="280"/>
        <end position="289"/>
    </location>
</feature>
<feature type="disulfide bond" evidence="1">
    <location>
        <begin position="318"/>
        <end position="337"/>
    </location>
</feature>
<feature type="disulfide bond" evidence="1">
    <location>
        <begin position="421"/>
        <end position="447"/>
    </location>
</feature>